<name>HFQ_BACAC</name>
<organism>
    <name type="scientific">Bacillus anthracis (strain CDC 684 / NRRL 3495)</name>
    <dbReference type="NCBI Taxonomy" id="568206"/>
    <lineage>
        <taxon>Bacteria</taxon>
        <taxon>Bacillati</taxon>
        <taxon>Bacillota</taxon>
        <taxon>Bacilli</taxon>
        <taxon>Bacillales</taxon>
        <taxon>Bacillaceae</taxon>
        <taxon>Bacillus</taxon>
        <taxon>Bacillus cereus group</taxon>
    </lineage>
</organism>
<proteinExistence type="inferred from homology"/>
<feature type="chain" id="PRO_1000135018" description="RNA-binding protein Hfq">
    <location>
        <begin position="1"/>
        <end position="74"/>
    </location>
</feature>
<feature type="domain" description="Sm" evidence="2">
    <location>
        <begin position="9"/>
        <end position="69"/>
    </location>
</feature>
<keyword id="KW-0694">RNA-binding</keyword>
<keyword id="KW-0346">Stress response</keyword>
<evidence type="ECO:0000255" key="1">
    <source>
        <dbReference type="HAMAP-Rule" id="MF_00436"/>
    </source>
</evidence>
<evidence type="ECO:0000255" key="2">
    <source>
        <dbReference type="PROSITE-ProRule" id="PRU01346"/>
    </source>
</evidence>
<comment type="function">
    <text evidence="1">RNA chaperone that binds small regulatory RNA (sRNAs) and mRNAs to facilitate mRNA translational regulation in response to envelope stress, environmental stress and changes in metabolite concentrations. Also binds with high specificity to tRNAs.</text>
</comment>
<comment type="subunit">
    <text evidence="1">Homohexamer.</text>
</comment>
<comment type="similarity">
    <text evidence="1">Belongs to the Hfq family.</text>
</comment>
<gene>
    <name evidence="1" type="primary">hfq</name>
    <name type="ordered locus">BAMEG_0791</name>
</gene>
<sequence length="74" mass="8646">MKQSINIQDQFLNQLRKENTFVTLYLLNGFQLRGLIKGFDNFTVLLETEGKQQLIYKHAISTFVPQKNVSIELE</sequence>
<dbReference type="EMBL" id="CP001215">
    <property type="protein sequence ID" value="ACP13855.1"/>
    <property type="molecule type" value="Genomic_DNA"/>
</dbReference>
<dbReference type="RefSeq" id="WP_000813896.1">
    <property type="nucleotide sequence ID" value="NC_012581.1"/>
</dbReference>
<dbReference type="SMR" id="C3L887"/>
<dbReference type="GeneID" id="93007416"/>
<dbReference type="KEGG" id="bah:BAMEG_0791"/>
<dbReference type="HOGENOM" id="CLU_113688_3_0_9"/>
<dbReference type="GO" id="GO:0005829">
    <property type="term" value="C:cytosol"/>
    <property type="evidence" value="ECO:0007669"/>
    <property type="project" value="TreeGrafter"/>
</dbReference>
<dbReference type="GO" id="GO:0003723">
    <property type="term" value="F:RNA binding"/>
    <property type="evidence" value="ECO:0007669"/>
    <property type="project" value="UniProtKB-UniRule"/>
</dbReference>
<dbReference type="GO" id="GO:0006355">
    <property type="term" value="P:regulation of DNA-templated transcription"/>
    <property type="evidence" value="ECO:0007669"/>
    <property type="project" value="InterPro"/>
</dbReference>
<dbReference type="GO" id="GO:0043487">
    <property type="term" value="P:regulation of RNA stability"/>
    <property type="evidence" value="ECO:0007669"/>
    <property type="project" value="TreeGrafter"/>
</dbReference>
<dbReference type="GO" id="GO:0045974">
    <property type="term" value="P:regulation of translation, ncRNA-mediated"/>
    <property type="evidence" value="ECO:0007669"/>
    <property type="project" value="TreeGrafter"/>
</dbReference>
<dbReference type="CDD" id="cd01716">
    <property type="entry name" value="Hfq"/>
    <property type="match status" value="1"/>
</dbReference>
<dbReference type="FunFam" id="2.30.30.100:FF:000012">
    <property type="entry name" value="RNA-binding protein Hfq"/>
    <property type="match status" value="1"/>
</dbReference>
<dbReference type="Gene3D" id="2.30.30.100">
    <property type="match status" value="1"/>
</dbReference>
<dbReference type="HAMAP" id="MF_00436">
    <property type="entry name" value="Hfq"/>
    <property type="match status" value="1"/>
</dbReference>
<dbReference type="InterPro" id="IPR005001">
    <property type="entry name" value="Hfq"/>
</dbReference>
<dbReference type="InterPro" id="IPR010920">
    <property type="entry name" value="LSM_dom_sf"/>
</dbReference>
<dbReference type="InterPro" id="IPR047575">
    <property type="entry name" value="Sm"/>
</dbReference>
<dbReference type="NCBIfam" id="TIGR02383">
    <property type="entry name" value="Hfq"/>
    <property type="match status" value="1"/>
</dbReference>
<dbReference type="NCBIfam" id="NF001602">
    <property type="entry name" value="PRK00395.1"/>
    <property type="match status" value="1"/>
</dbReference>
<dbReference type="PANTHER" id="PTHR34772">
    <property type="entry name" value="RNA-BINDING PROTEIN HFQ"/>
    <property type="match status" value="1"/>
</dbReference>
<dbReference type="PANTHER" id="PTHR34772:SF1">
    <property type="entry name" value="RNA-BINDING PROTEIN HFQ"/>
    <property type="match status" value="1"/>
</dbReference>
<dbReference type="Pfam" id="PF17209">
    <property type="entry name" value="Hfq"/>
    <property type="match status" value="1"/>
</dbReference>
<dbReference type="SUPFAM" id="SSF50182">
    <property type="entry name" value="Sm-like ribonucleoproteins"/>
    <property type="match status" value="1"/>
</dbReference>
<dbReference type="PROSITE" id="PS52002">
    <property type="entry name" value="SM"/>
    <property type="match status" value="1"/>
</dbReference>
<reference key="1">
    <citation type="submission" date="2008-10" db="EMBL/GenBank/DDBJ databases">
        <title>Genome sequence of Bacillus anthracis str. CDC 684.</title>
        <authorList>
            <person name="Dodson R.J."/>
            <person name="Munk A.C."/>
            <person name="Brettin T."/>
            <person name="Bruce D."/>
            <person name="Detter C."/>
            <person name="Tapia R."/>
            <person name="Han C."/>
            <person name="Sutton G."/>
            <person name="Sims D."/>
        </authorList>
    </citation>
    <scope>NUCLEOTIDE SEQUENCE [LARGE SCALE GENOMIC DNA]</scope>
    <source>
        <strain>CDC 684 / NRRL 3495</strain>
    </source>
</reference>
<accession>C3L887</accession>
<protein>
    <recommendedName>
        <fullName evidence="1">RNA-binding protein Hfq</fullName>
    </recommendedName>
</protein>